<sequence length="370" mass="40865">MTNANVDATPLTTKPSQDGFYMPAEWAAQQAVWMIWPYRPDNWRSAGAYAQATFAKVADAIGGATPVYMGVPKAFLAEAQKVMPSHVTLVEMDSNDCWARDTGPTVVVNDNGECRGVDWGFNAWGGHNGGLYFPWDKDEQVAQQMLKQHGFARYSAPLILEGGSIHVDGEGTCMTSAECLLNANRNPELTKEQIEDLLRDYLNVKQFIWLQDGVYMDETDGHIDNMCCFARPGEVILHWTDDETDPQYPRSKAALDVLQNTVDAQGRKLKIHLLPQPGPLYCTEEESLGVTEGTGVPRTAGERLAGSYVNFLITNNRIVFPMLDPATDDIAAQKLQEIFPEYEIIGVPAREILLGGGNIHCITQQIPSGK</sequence>
<dbReference type="EC" id="3.5.3.12" evidence="1"/>
<dbReference type="EMBL" id="CP000563">
    <property type="protein sequence ID" value="ABN62611.1"/>
    <property type="molecule type" value="Genomic_DNA"/>
</dbReference>
<dbReference type="RefSeq" id="WP_011847440.1">
    <property type="nucleotide sequence ID" value="NC_009052.1"/>
</dbReference>
<dbReference type="SMR" id="A3D798"/>
<dbReference type="STRING" id="325240.Sbal_3130"/>
<dbReference type="KEGG" id="sbl:Sbal_3130"/>
<dbReference type="HOGENOM" id="CLU_037682_1_0_6"/>
<dbReference type="OrthoDB" id="9808013at2"/>
<dbReference type="Proteomes" id="UP000001557">
    <property type="component" value="Chromosome"/>
</dbReference>
<dbReference type="GO" id="GO:0047632">
    <property type="term" value="F:agmatine deiminase activity"/>
    <property type="evidence" value="ECO:0007669"/>
    <property type="project" value="UniProtKB-UniRule"/>
</dbReference>
<dbReference type="GO" id="GO:0004668">
    <property type="term" value="F:protein-arginine deiminase activity"/>
    <property type="evidence" value="ECO:0007669"/>
    <property type="project" value="InterPro"/>
</dbReference>
<dbReference type="GO" id="GO:0009446">
    <property type="term" value="P:putrescine biosynthetic process"/>
    <property type="evidence" value="ECO:0007669"/>
    <property type="project" value="InterPro"/>
</dbReference>
<dbReference type="Gene3D" id="3.75.10.10">
    <property type="entry name" value="L-arginine/glycine Amidinotransferase, Chain A"/>
    <property type="match status" value="1"/>
</dbReference>
<dbReference type="HAMAP" id="MF_01841">
    <property type="entry name" value="Agmatine_deimin"/>
    <property type="match status" value="1"/>
</dbReference>
<dbReference type="InterPro" id="IPR017754">
    <property type="entry name" value="Agmatine_deiminase"/>
</dbReference>
<dbReference type="InterPro" id="IPR007466">
    <property type="entry name" value="Peptidyl-Arg-deiminase_porph"/>
</dbReference>
<dbReference type="NCBIfam" id="TIGR03380">
    <property type="entry name" value="agmatine_aguA"/>
    <property type="match status" value="1"/>
</dbReference>
<dbReference type="NCBIfam" id="NF010070">
    <property type="entry name" value="PRK13551.1"/>
    <property type="match status" value="1"/>
</dbReference>
<dbReference type="PANTHER" id="PTHR31377">
    <property type="entry name" value="AGMATINE DEIMINASE-RELATED"/>
    <property type="match status" value="1"/>
</dbReference>
<dbReference type="PANTHER" id="PTHR31377:SF0">
    <property type="entry name" value="AGMATINE DEIMINASE-RELATED"/>
    <property type="match status" value="1"/>
</dbReference>
<dbReference type="Pfam" id="PF04371">
    <property type="entry name" value="PAD_porph"/>
    <property type="match status" value="1"/>
</dbReference>
<dbReference type="SUPFAM" id="SSF55909">
    <property type="entry name" value="Pentein"/>
    <property type="match status" value="1"/>
</dbReference>
<gene>
    <name evidence="1" type="primary">aguA</name>
    <name type="ordered locus">Sbal_3130</name>
</gene>
<comment type="catalytic activity">
    <reaction evidence="1">
        <text>agmatine + H2O = N-carbamoylputrescine + NH4(+)</text>
        <dbReference type="Rhea" id="RHEA:18037"/>
        <dbReference type="ChEBI" id="CHEBI:15377"/>
        <dbReference type="ChEBI" id="CHEBI:28938"/>
        <dbReference type="ChEBI" id="CHEBI:58145"/>
        <dbReference type="ChEBI" id="CHEBI:58318"/>
        <dbReference type="EC" id="3.5.3.12"/>
    </reaction>
</comment>
<comment type="similarity">
    <text evidence="1">Belongs to the agmatine deiminase family.</text>
</comment>
<name>AGUA_SHEB5</name>
<keyword id="KW-0378">Hydrolase</keyword>
<keyword id="KW-1185">Reference proteome</keyword>
<reference key="1">
    <citation type="submission" date="2007-02" db="EMBL/GenBank/DDBJ databases">
        <title>Complete sequence of chromosome of Shewanella baltica OS155.</title>
        <authorList>
            <consortium name="US DOE Joint Genome Institute"/>
            <person name="Copeland A."/>
            <person name="Lucas S."/>
            <person name="Lapidus A."/>
            <person name="Barry K."/>
            <person name="Detter J.C."/>
            <person name="Glavina del Rio T."/>
            <person name="Hammon N."/>
            <person name="Israni S."/>
            <person name="Dalin E."/>
            <person name="Tice H."/>
            <person name="Pitluck S."/>
            <person name="Sims D.R."/>
            <person name="Brettin T."/>
            <person name="Bruce D."/>
            <person name="Han C."/>
            <person name="Tapia R."/>
            <person name="Brainard J."/>
            <person name="Schmutz J."/>
            <person name="Larimer F."/>
            <person name="Land M."/>
            <person name="Hauser L."/>
            <person name="Kyrpides N."/>
            <person name="Mikhailova N."/>
            <person name="Brettar I."/>
            <person name="Klappenbach J."/>
            <person name="Konstantinidis K."/>
            <person name="Rodrigues J."/>
            <person name="Tiedje J."/>
            <person name="Richardson P."/>
        </authorList>
    </citation>
    <scope>NUCLEOTIDE SEQUENCE [LARGE SCALE GENOMIC DNA]</scope>
    <source>
        <strain>OS155 / ATCC BAA-1091</strain>
    </source>
</reference>
<protein>
    <recommendedName>
        <fullName evidence="1">Putative agmatine deiminase</fullName>
        <ecNumber evidence="1">3.5.3.12</ecNumber>
    </recommendedName>
    <alternativeName>
        <fullName evidence="1">Agmatine iminohydrolase</fullName>
    </alternativeName>
</protein>
<evidence type="ECO:0000255" key="1">
    <source>
        <dbReference type="HAMAP-Rule" id="MF_01841"/>
    </source>
</evidence>
<proteinExistence type="inferred from homology"/>
<organism>
    <name type="scientific">Shewanella baltica (strain OS155 / ATCC BAA-1091)</name>
    <dbReference type="NCBI Taxonomy" id="325240"/>
    <lineage>
        <taxon>Bacteria</taxon>
        <taxon>Pseudomonadati</taxon>
        <taxon>Pseudomonadota</taxon>
        <taxon>Gammaproteobacteria</taxon>
        <taxon>Alteromonadales</taxon>
        <taxon>Shewanellaceae</taxon>
        <taxon>Shewanella</taxon>
    </lineage>
</organism>
<accession>A3D798</accession>
<feature type="chain" id="PRO_1000070567" description="Putative agmatine deiminase">
    <location>
        <begin position="1"/>
        <end position="370"/>
    </location>
</feature>
<feature type="active site" description="Amidino-cysteine intermediate" evidence="1">
    <location>
        <position position="361"/>
    </location>
</feature>